<gene>
    <name type="primary">mettl21a</name>
    <name type="synonym">Fam119a</name>
    <name type="ORF">zgc:110528</name>
</gene>
<proteinExistence type="evidence at transcript level"/>
<accession>Q5BLD8</accession>
<dbReference type="EC" id="2.1.1.-" evidence="1"/>
<dbReference type="EMBL" id="BC090479">
    <property type="protein sequence ID" value="AAH90479.1"/>
    <property type="molecule type" value="mRNA"/>
</dbReference>
<dbReference type="RefSeq" id="NP_001013584.1">
    <property type="nucleotide sequence ID" value="NM_001013566.2"/>
</dbReference>
<dbReference type="RefSeq" id="XP_009294375.1">
    <property type="nucleotide sequence ID" value="XM_009296100.2"/>
</dbReference>
<dbReference type="SMR" id="Q5BLD8"/>
<dbReference type="FunCoup" id="Q5BLD8">
    <property type="interactions" value="446"/>
</dbReference>
<dbReference type="STRING" id="7955.ENSDARP00000026757"/>
<dbReference type="PaxDb" id="7955-ENSDARP00000026757"/>
<dbReference type="Ensembl" id="ENSDART00000025198">
    <property type="protein sequence ID" value="ENSDARP00000026757"/>
    <property type="gene ID" value="ENSDARG00000012051"/>
</dbReference>
<dbReference type="GeneID" id="541441"/>
<dbReference type="KEGG" id="dre:541441"/>
<dbReference type="AGR" id="ZFIN:ZDB-GENE-050320-145"/>
<dbReference type="CTD" id="151194"/>
<dbReference type="ZFIN" id="ZDB-GENE-050320-145">
    <property type="gene designation" value="mettl21a"/>
</dbReference>
<dbReference type="eggNOG" id="KOG2793">
    <property type="taxonomic scope" value="Eukaryota"/>
</dbReference>
<dbReference type="HOGENOM" id="CLU_055721_4_2_1"/>
<dbReference type="InParanoid" id="Q5BLD8"/>
<dbReference type="OMA" id="LFWELCD"/>
<dbReference type="OrthoDB" id="413520at2759"/>
<dbReference type="PhylomeDB" id="Q5BLD8"/>
<dbReference type="TreeFam" id="TF313206"/>
<dbReference type="Reactome" id="R-DRE-8876725">
    <property type="pathway name" value="Protein methylation"/>
</dbReference>
<dbReference type="PRO" id="PR:Q5BLD8"/>
<dbReference type="Proteomes" id="UP000000437">
    <property type="component" value="Chromosome 22"/>
</dbReference>
<dbReference type="Bgee" id="ENSDARG00000012051">
    <property type="expression patterns" value="Expressed in early embryo and 21 other cell types or tissues"/>
</dbReference>
<dbReference type="GO" id="GO:0005829">
    <property type="term" value="C:cytosol"/>
    <property type="evidence" value="ECO:0000318"/>
    <property type="project" value="GO_Central"/>
</dbReference>
<dbReference type="GO" id="GO:0032991">
    <property type="term" value="C:protein-containing complex"/>
    <property type="evidence" value="ECO:0000318"/>
    <property type="project" value="GO_Central"/>
</dbReference>
<dbReference type="GO" id="GO:0016279">
    <property type="term" value="F:protein-lysine N-methyltransferase activity"/>
    <property type="evidence" value="ECO:0000250"/>
    <property type="project" value="UniProtKB"/>
</dbReference>
<dbReference type="GO" id="GO:0006479">
    <property type="term" value="P:protein methylation"/>
    <property type="evidence" value="ECO:0000250"/>
    <property type="project" value="UniProtKB"/>
</dbReference>
<dbReference type="CDD" id="cd02440">
    <property type="entry name" value="AdoMet_MTases"/>
    <property type="match status" value="1"/>
</dbReference>
<dbReference type="FunFam" id="3.40.50.150:FF:000137">
    <property type="entry name" value="protein N-lysine methyltransferase METTL21A"/>
    <property type="match status" value="1"/>
</dbReference>
<dbReference type="Gene3D" id="3.40.50.150">
    <property type="entry name" value="Vaccinia Virus protein VP39"/>
    <property type="match status" value="1"/>
</dbReference>
<dbReference type="InterPro" id="IPR019410">
    <property type="entry name" value="Methyltransf_16"/>
</dbReference>
<dbReference type="InterPro" id="IPR029063">
    <property type="entry name" value="SAM-dependent_MTases_sf"/>
</dbReference>
<dbReference type="PANTHER" id="PTHR14614">
    <property type="entry name" value="HEPATOCELLULAR CARCINOMA-ASSOCIATED ANTIGEN"/>
    <property type="match status" value="1"/>
</dbReference>
<dbReference type="PANTHER" id="PTHR14614:SF14">
    <property type="entry name" value="PROTEIN N-LYSINE METHYLTRANSFERASE METTL21A"/>
    <property type="match status" value="1"/>
</dbReference>
<dbReference type="Pfam" id="PF10294">
    <property type="entry name" value="Methyltransf_16"/>
    <property type="match status" value="1"/>
</dbReference>
<dbReference type="SUPFAM" id="SSF53335">
    <property type="entry name" value="S-adenosyl-L-methionine-dependent methyltransferases"/>
    <property type="match status" value="1"/>
</dbReference>
<protein>
    <recommendedName>
        <fullName>Protein N-lysine methyltransferase METTL21A</fullName>
        <ecNumber evidence="1">2.1.1.-</ecNumber>
    </recommendedName>
    <alternativeName>
        <fullName>Methyltransferase-like protein 21A</fullName>
    </alternativeName>
</protein>
<evidence type="ECO:0000250" key="1">
    <source>
        <dbReference type="UniProtKB" id="Q8WXB1"/>
    </source>
</evidence>
<evidence type="ECO:0000305" key="2"/>
<reference key="1">
    <citation type="submission" date="2005-02" db="EMBL/GenBank/DDBJ databases">
        <authorList>
            <consortium name="NIH - Zebrafish Gene Collection (ZGC) project"/>
        </authorList>
    </citation>
    <scope>NUCLEOTIDE SEQUENCE [LARGE SCALE MRNA]</scope>
    <source>
        <tissue>Embryo</tissue>
    </source>
</reference>
<sequence>MALVPYDENVLPALSKLHQSSAEFTLANHRIRLSQDWKRLGVAAVVWDAAVVLCMFLEMGKVDLKGKRVIELGAGTGLVGIVAALLGANVTITDREPALEFLTANVHENIPQGRQKAVQVSELTWGENLDLYPQGGYDLILGADIVYLEETFPALLQTLEHLSSGDTVVLLSCRIRYERDERFLTELRQRFSVQEVHYDSQRDIHVYRAVKNKSNTEL</sequence>
<organism>
    <name type="scientific">Danio rerio</name>
    <name type="common">Zebrafish</name>
    <name type="synonym">Brachydanio rerio</name>
    <dbReference type="NCBI Taxonomy" id="7955"/>
    <lineage>
        <taxon>Eukaryota</taxon>
        <taxon>Metazoa</taxon>
        <taxon>Chordata</taxon>
        <taxon>Craniata</taxon>
        <taxon>Vertebrata</taxon>
        <taxon>Euteleostomi</taxon>
        <taxon>Actinopterygii</taxon>
        <taxon>Neopterygii</taxon>
        <taxon>Teleostei</taxon>
        <taxon>Ostariophysi</taxon>
        <taxon>Cypriniformes</taxon>
        <taxon>Danionidae</taxon>
        <taxon>Danioninae</taxon>
        <taxon>Danio</taxon>
    </lineage>
</organism>
<comment type="function">
    <text evidence="1">Protein-lysine methyltransferase that selectively trimethylates residues in heat shock protein 70 (HSP70) family members.</text>
</comment>
<comment type="catalytic activity">
    <reaction evidence="1">
        <text>L-lysyl-[protein] + 3 S-adenosyl-L-methionine = N(6),N(6),N(6)-trimethyl-L-lysyl-[protein] + 3 S-adenosyl-L-homocysteine + 3 H(+)</text>
        <dbReference type="Rhea" id="RHEA:54192"/>
        <dbReference type="Rhea" id="RHEA-COMP:9752"/>
        <dbReference type="Rhea" id="RHEA-COMP:13826"/>
        <dbReference type="ChEBI" id="CHEBI:15378"/>
        <dbReference type="ChEBI" id="CHEBI:29969"/>
        <dbReference type="ChEBI" id="CHEBI:57856"/>
        <dbReference type="ChEBI" id="CHEBI:59789"/>
        <dbReference type="ChEBI" id="CHEBI:61961"/>
    </reaction>
    <physiologicalReaction direction="left-to-right" evidence="1">
        <dbReference type="Rhea" id="RHEA:54193"/>
    </physiologicalReaction>
</comment>
<comment type="subcellular location">
    <subcellularLocation>
        <location evidence="1">Cytoplasm</location>
    </subcellularLocation>
</comment>
<comment type="similarity">
    <text evidence="2">Belongs to the methyltransferase superfamily. METTL21 family.</text>
</comment>
<name>MT21A_DANRE</name>
<feature type="chain" id="PRO_0000292036" description="Protein N-lysine methyltransferase METTL21A">
    <location>
        <begin position="1"/>
        <end position="218"/>
    </location>
</feature>
<feature type="binding site" evidence="1">
    <location>
        <position position="47"/>
    </location>
    <ligand>
        <name>S-adenosyl-L-methionine</name>
        <dbReference type="ChEBI" id="CHEBI:59789"/>
    </ligand>
</feature>
<feature type="binding site" evidence="1">
    <location>
        <begin position="73"/>
        <end position="75"/>
    </location>
    <ligand>
        <name>S-adenosyl-L-methionine</name>
        <dbReference type="ChEBI" id="CHEBI:59789"/>
    </ligand>
</feature>
<feature type="binding site" evidence="1">
    <location>
        <position position="94"/>
    </location>
    <ligand>
        <name>S-adenosyl-L-methionine</name>
        <dbReference type="ChEBI" id="CHEBI:59789"/>
    </ligand>
</feature>
<feature type="binding site" evidence="1">
    <location>
        <position position="125"/>
    </location>
    <ligand>
        <name>S-adenosyl-L-methionine</name>
        <dbReference type="ChEBI" id="CHEBI:59789"/>
    </ligand>
</feature>
<feature type="binding site" evidence="1">
    <location>
        <position position="143"/>
    </location>
    <ligand>
        <name>S-adenosyl-L-methionine</name>
        <dbReference type="ChEBI" id="CHEBI:59789"/>
    </ligand>
</feature>
<keyword id="KW-0963">Cytoplasm</keyword>
<keyword id="KW-0489">Methyltransferase</keyword>
<keyword id="KW-1185">Reference proteome</keyword>
<keyword id="KW-0949">S-adenosyl-L-methionine</keyword>
<keyword id="KW-0808">Transferase</keyword>